<comment type="function">
    <text evidence="1">Molecular chaperone. Has ATPase activity.</text>
</comment>
<comment type="subunit">
    <text evidence="1">Homodimer.</text>
</comment>
<comment type="subcellular location">
    <subcellularLocation>
        <location evidence="1">Cytoplasm</location>
    </subcellularLocation>
</comment>
<comment type="similarity">
    <text evidence="1">Belongs to the heat shock protein 90 family.</text>
</comment>
<gene>
    <name evidence="1" type="primary">htpG</name>
    <name type="ordered locus">BMASAVP1_A1005</name>
</gene>
<accession>A1V292</accession>
<dbReference type="EMBL" id="CP000526">
    <property type="protein sequence ID" value="ABM50085.1"/>
    <property type="molecule type" value="Genomic_DNA"/>
</dbReference>
<dbReference type="RefSeq" id="WP_004185742.1">
    <property type="nucleotide sequence ID" value="NC_008785.1"/>
</dbReference>
<dbReference type="SMR" id="A1V292"/>
<dbReference type="GeneID" id="93059584"/>
<dbReference type="KEGG" id="bmv:BMASAVP1_A1005"/>
<dbReference type="HOGENOM" id="CLU_006684_3_0_4"/>
<dbReference type="GO" id="GO:0005737">
    <property type="term" value="C:cytoplasm"/>
    <property type="evidence" value="ECO:0007669"/>
    <property type="project" value="UniProtKB-SubCell"/>
</dbReference>
<dbReference type="GO" id="GO:0005524">
    <property type="term" value="F:ATP binding"/>
    <property type="evidence" value="ECO:0007669"/>
    <property type="project" value="UniProtKB-UniRule"/>
</dbReference>
<dbReference type="GO" id="GO:0016887">
    <property type="term" value="F:ATP hydrolysis activity"/>
    <property type="evidence" value="ECO:0007669"/>
    <property type="project" value="InterPro"/>
</dbReference>
<dbReference type="GO" id="GO:0140662">
    <property type="term" value="F:ATP-dependent protein folding chaperone"/>
    <property type="evidence" value="ECO:0007669"/>
    <property type="project" value="InterPro"/>
</dbReference>
<dbReference type="GO" id="GO:0051082">
    <property type="term" value="F:unfolded protein binding"/>
    <property type="evidence" value="ECO:0007669"/>
    <property type="project" value="UniProtKB-UniRule"/>
</dbReference>
<dbReference type="CDD" id="cd16927">
    <property type="entry name" value="HATPase_Hsp90-like"/>
    <property type="match status" value="1"/>
</dbReference>
<dbReference type="FunFam" id="3.30.230.80:FF:000002">
    <property type="entry name" value="Molecular chaperone HtpG"/>
    <property type="match status" value="1"/>
</dbReference>
<dbReference type="FunFam" id="3.30.565.10:FF:000009">
    <property type="entry name" value="Molecular chaperone HtpG"/>
    <property type="match status" value="1"/>
</dbReference>
<dbReference type="Gene3D" id="3.30.230.80">
    <property type="match status" value="1"/>
</dbReference>
<dbReference type="Gene3D" id="3.40.50.11260">
    <property type="match status" value="1"/>
</dbReference>
<dbReference type="Gene3D" id="1.20.120.790">
    <property type="entry name" value="Heat shock protein 90, C-terminal domain"/>
    <property type="match status" value="1"/>
</dbReference>
<dbReference type="Gene3D" id="3.30.565.10">
    <property type="entry name" value="Histidine kinase-like ATPase, C-terminal domain"/>
    <property type="match status" value="1"/>
</dbReference>
<dbReference type="HAMAP" id="MF_00505">
    <property type="entry name" value="HSP90"/>
    <property type="match status" value="1"/>
</dbReference>
<dbReference type="InterPro" id="IPR036890">
    <property type="entry name" value="HATPase_C_sf"/>
</dbReference>
<dbReference type="InterPro" id="IPR019805">
    <property type="entry name" value="Heat_shock_protein_90_CS"/>
</dbReference>
<dbReference type="InterPro" id="IPR037196">
    <property type="entry name" value="HSP90_C"/>
</dbReference>
<dbReference type="InterPro" id="IPR001404">
    <property type="entry name" value="Hsp90_fam"/>
</dbReference>
<dbReference type="InterPro" id="IPR020575">
    <property type="entry name" value="Hsp90_N"/>
</dbReference>
<dbReference type="InterPro" id="IPR020568">
    <property type="entry name" value="Ribosomal_Su5_D2-typ_SF"/>
</dbReference>
<dbReference type="NCBIfam" id="NF003555">
    <property type="entry name" value="PRK05218.1"/>
    <property type="match status" value="1"/>
</dbReference>
<dbReference type="PANTHER" id="PTHR11528">
    <property type="entry name" value="HEAT SHOCK PROTEIN 90 FAMILY MEMBER"/>
    <property type="match status" value="1"/>
</dbReference>
<dbReference type="Pfam" id="PF13589">
    <property type="entry name" value="HATPase_c_3"/>
    <property type="match status" value="1"/>
</dbReference>
<dbReference type="Pfam" id="PF00183">
    <property type="entry name" value="HSP90"/>
    <property type="match status" value="1"/>
</dbReference>
<dbReference type="PIRSF" id="PIRSF002583">
    <property type="entry name" value="Hsp90"/>
    <property type="match status" value="1"/>
</dbReference>
<dbReference type="PRINTS" id="PR00775">
    <property type="entry name" value="HEATSHOCK90"/>
</dbReference>
<dbReference type="SMART" id="SM00387">
    <property type="entry name" value="HATPase_c"/>
    <property type="match status" value="1"/>
</dbReference>
<dbReference type="SUPFAM" id="SSF55874">
    <property type="entry name" value="ATPase domain of HSP90 chaperone/DNA topoisomerase II/histidine kinase"/>
    <property type="match status" value="1"/>
</dbReference>
<dbReference type="SUPFAM" id="SSF110942">
    <property type="entry name" value="HSP90 C-terminal domain"/>
    <property type="match status" value="1"/>
</dbReference>
<dbReference type="SUPFAM" id="SSF54211">
    <property type="entry name" value="Ribosomal protein S5 domain 2-like"/>
    <property type="match status" value="1"/>
</dbReference>
<dbReference type="PROSITE" id="PS00298">
    <property type="entry name" value="HSP90"/>
    <property type="match status" value="1"/>
</dbReference>
<keyword id="KW-0067">ATP-binding</keyword>
<keyword id="KW-0143">Chaperone</keyword>
<keyword id="KW-0963">Cytoplasm</keyword>
<keyword id="KW-0547">Nucleotide-binding</keyword>
<keyword id="KW-0346">Stress response</keyword>
<evidence type="ECO:0000255" key="1">
    <source>
        <dbReference type="HAMAP-Rule" id="MF_00505"/>
    </source>
</evidence>
<organism>
    <name type="scientific">Burkholderia mallei (strain SAVP1)</name>
    <dbReference type="NCBI Taxonomy" id="320388"/>
    <lineage>
        <taxon>Bacteria</taxon>
        <taxon>Pseudomonadati</taxon>
        <taxon>Pseudomonadota</taxon>
        <taxon>Betaproteobacteria</taxon>
        <taxon>Burkholderiales</taxon>
        <taxon>Burkholderiaceae</taxon>
        <taxon>Burkholderia</taxon>
        <taxon>pseudomallei group</taxon>
    </lineage>
</organism>
<proteinExistence type="inferred from homology"/>
<name>HTPG_BURMS</name>
<protein>
    <recommendedName>
        <fullName evidence="1">Chaperone protein HtpG</fullName>
    </recommendedName>
    <alternativeName>
        <fullName evidence="1">Heat shock protein HtpG</fullName>
    </alternativeName>
    <alternativeName>
        <fullName evidence="1">High temperature protein G</fullName>
    </alternativeName>
</protein>
<feature type="chain" id="PRO_1000014903" description="Chaperone protein HtpG">
    <location>
        <begin position="1"/>
        <end position="632"/>
    </location>
</feature>
<feature type="region of interest" description="A; substrate-binding" evidence="1">
    <location>
        <begin position="1"/>
        <end position="339"/>
    </location>
</feature>
<feature type="region of interest" description="B" evidence="1">
    <location>
        <begin position="340"/>
        <end position="559"/>
    </location>
</feature>
<feature type="region of interest" description="C" evidence="1">
    <location>
        <begin position="560"/>
        <end position="632"/>
    </location>
</feature>
<sequence length="632" mass="71149">MTQQTMSFQAEVKQLLHLMIHSLYSNKEIFLRELVSNASDAADKLRFEALENNALYESDPNLRIRLSFDKAARTITIDDNGIGMSRDEAIANLGTIARSGTKEFFSKLSGDQQKDAALIGQFGVGFYSGFIVADRITVETRRAGLPASEGVRWESAGEGDFQVDTIERAARGTTITLHLREGEDELLSSYRLKSIVQKYSDHVALPILMKKEEWDQEKGEMVEKDEDETINQASALWTRAKSEVTDEQYKQFYQHVAHDHQDPLAWTHNRVEGRSEYTQLLFVPSHAPFDLWNRDYRGGLKLYVKRVFIMDDAEQLLPQYLRFIKGVVDSSDLPLNVSREILQESRDVKAIREGVTKRALSMLEELANAEDDAGKEKYKTFWSAFGQVLKEGVGEDHANRERVAKLLRFASTHGDTDAQDVALADYVARMKPEQTKIYYVTADTWQAAKNSPHLEVFRKKGVEVLLLTDRVDEWMLSFLHEFDGKPLASVARGDLDLGALNDDEKKAQEETGEAMKPVVDKMKETLGEKVKDVRVTFRLTDSPSCLVADDNDMSGYLQRMLKAAGQSAPSFQPILEINPEHPLVKALKADGADFGDWCHLLFDQALLAEGGALEDPASFVKRTNALLLSRAA</sequence>
<reference key="1">
    <citation type="journal article" date="2010" name="Genome Biol. Evol.">
        <title>Continuing evolution of Burkholderia mallei through genome reduction and large-scale rearrangements.</title>
        <authorList>
            <person name="Losada L."/>
            <person name="Ronning C.M."/>
            <person name="DeShazer D."/>
            <person name="Woods D."/>
            <person name="Fedorova N."/>
            <person name="Kim H.S."/>
            <person name="Shabalina S.A."/>
            <person name="Pearson T.R."/>
            <person name="Brinkac L."/>
            <person name="Tan P."/>
            <person name="Nandi T."/>
            <person name="Crabtree J."/>
            <person name="Badger J."/>
            <person name="Beckstrom-Sternberg S."/>
            <person name="Saqib M."/>
            <person name="Schutzer S.E."/>
            <person name="Keim P."/>
            <person name="Nierman W.C."/>
        </authorList>
    </citation>
    <scope>NUCLEOTIDE SEQUENCE [LARGE SCALE GENOMIC DNA]</scope>
    <source>
        <strain>SAVP1</strain>
    </source>
</reference>